<name>ACEK_SALEP</name>
<sequence length="583" mass="67984">MPRGLELLIAQTILQGFDAQYGRFLEVTSGAQQRFEQADWHAVQQAMKSRIHLYDHHVGLVVEQLRCITDGKSTDADFLLRVKEHYTRLLPDYPRFEIAESFFNSVYCRLFDHRSLTPERLFIFSSQPERRFRTIPRPLAKDFFPDHGWEPLLMRILSDLPLRLPWQNKSRDIRYIIAHLTETLGEDALPRCHVQVANELFYRNKAAWLVGKLTTPDGTLPFLLPIHRTDEGELFVDTCLTTTAEASIVFGFARSYFMVYAPLPAALVEWLREILPGKTTAELYMAIGCQKHAKTESYREYLCYLAESDEKFIEAPGIRGMVMLVFTLPGFDRVFKIIKDKFAPQKEMSAAHVRACYQLVKEHDRVGRMADTQEFENFVLDKRQIDPALMALLRQEVPEKITDLGEHIVIRHLYIERRMVPLNIWLEQVEGQQLRDAIEEYGNAIRQLAAANIFPGDMLFKNFGVTRHGRVVFYDYDEICYMTEVNFRDIPPARYPEDELASEPWYSVSPGDVFPEEFRHWLCADPRIGPLFEEMHADLFRADYWRALQTRIKEGHVEDVYAYRRRQRFSVRYGAISSTANSS</sequence>
<protein>
    <recommendedName>
        <fullName evidence="1">Isocitrate dehydrogenase kinase/phosphatase</fullName>
        <shortName evidence="1">IDH kinase/phosphatase</shortName>
        <shortName evidence="1">IDHK/P</shortName>
        <ecNumber evidence="1">2.7.11.5</ecNumber>
        <ecNumber evidence="1">3.1.3.-</ecNumber>
    </recommendedName>
</protein>
<gene>
    <name evidence="1" type="primary">aceK</name>
    <name type="ordered locus">SEN3967</name>
</gene>
<organism>
    <name type="scientific">Salmonella enteritidis PT4 (strain P125109)</name>
    <dbReference type="NCBI Taxonomy" id="550537"/>
    <lineage>
        <taxon>Bacteria</taxon>
        <taxon>Pseudomonadati</taxon>
        <taxon>Pseudomonadota</taxon>
        <taxon>Gammaproteobacteria</taxon>
        <taxon>Enterobacterales</taxon>
        <taxon>Enterobacteriaceae</taxon>
        <taxon>Salmonella</taxon>
    </lineage>
</organism>
<comment type="function">
    <text evidence="1">Bifunctional enzyme which can phosphorylate or dephosphorylate isocitrate dehydrogenase (IDH) on a specific serine residue. This is a regulatory mechanism which enables bacteria to bypass the Krebs cycle via the glyoxylate shunt in response to the source of carbon. When bacteria are grown on glucose, IDH is fully active and unphosphorylated, but when grown on acetate or ethanol, the activity of IDH declines drastically concomitant with its phosphorylation.</text>
</comment>
<comment type="catalytic activity">
    <reaction evidence="1">
        <text>L-seryl-[isocitrate dehydrogenase] + ATP = O-phospho-L-seryl-[isocitrate dehydrogenase] + ADP + H(+)</text>
        <dbReference type="Rhea" id="RHEA:43540"/>
        <dbReference type="Rhea" id="RHEA-COMP:10605"/>
        <dbReference type="Rhea" id="RHEA-COMP:10606"/>
        <dbReference type="ChEBI" id="CHEBI:15378"/>
        <dbReference type="ChEBI" id="CHEBI:29999"/>
        <dbReference type="ChEBI" id="CHEBI:30616"/>
        <dbReference type="ChEBI" id="CHEBI:83421"/>
        <dbReference type="ChEBI" id="CHEBI:456216"/>
        <dbReference type="EC" id="2.7.11.5"/>
    </reaction>
</comment>
<comment type="subcellular location">
    <subcellularLocation>
        <location evidence="1">Cytoplasm</location>
    </subcellularLocation>
</comment>
<comment type="similarity">
    <text evidence="1">Belongs to the AceK family.</text>
</comment>
<dbReference type="EC" id="2.7.11.5" evidence="1"/>
<dbReference type="EC" id="3.1.3.-" evidence="1"/>
<dbReference type="EMBL" id="AM933172">
    <property type="protein sequence ID" value="CAR35536.1"/>
    <property type="molecule type" value="Genomic_DNA"/>
</dbReference>
<dbReference type="RefSeq" id="WP_001137268.1">
    <property type="nucleotide sequence ID" value="NC_011294.1"/>
</dbReference>
<dbReference type="SMR" id="B5QYG6"/>
<dbReference type="KEGG" id="set:SEN3967"/>
<dbReference type="HOGENOM" id="CLU_033804_1_1_6"/>
<dbReference type="Proteomes" id="UP000000613">
    <property type="component" value="Chromosome"/>
</dbReference>
<dbReference type="GO" id="GO:0005737">
    <property type="term" value="C:cytoplasm"/>
    <property type="evidence" value="ECO:0007669"/>
    <property type="project" value="UniProtKB-SubCell"/>
</dbReference>
<dbReference type="GO" id="GO:0008772">
    <property type="term" value="F:[isocitrate dehydrogenase (NADP+)] kinase activity"/>
    <property type="evidence" value="ECO:0007669"/>
    <property type="project" value="UniProtKB-UniRule"/>
</dbReference>
<dbReference type="GO" id="GO:0016208">
    <property type="term" value="F:AMP binding"/>
    <property type="evidence" value="ECO:0007669"/>
    <property type="project" value="TreeGrafter"/>
</dbReference>
<dbReference type="GO" id="GO:0005524">
    <property type="term" value="F:ATP binding"/>
    <property type="evidence" value="ECO:0007669"/>
    <property type="project" value="UniProtKB-UniRule"/>
</dbReference>
<dbReference type="GO" id="GO:0004721">
    <property type="term" value="F:phosphoprotein phosphatase activity"/>
    <property type="evidence" value="ECO:0007669"/>
    <property type="project" value="UniProtKB-KW"/>
</dbReference>
<dbReference type="GO" id="GO:0004674">
    <property type="term" value="F:protein serine/threonine kinase activity"/>
    <property type="evidence" value="ECO:0007669"/>
    <property type="project" value="UniProtKB-KW"/>
</dbReference>
<dbReference type="GO" id="GO:0006006">
    <property type="term" value="P:glucose metabolic process"/>
    <property type="evidence" value="ECO:0007669"/>
    <property type="project" value="InterPro"/>
</dbReference>
<dbReference type="GO" id="GO:0006097">
    <property type="term" value="P:glyoxylate cycle"/>
    <property type="evidence" value="ECO:0007669"/>
    <property type="project" value="UniProtKB-UniRule"/>
</dbReference>
<dbReference type="GO" id="GO:0006099">
    <property type="term" value="P:tricarboxylic acid cycle"/>
    <property type="evidence" value="ECO:0007669"/>
    <property type="project" value="UniProtKB-UniRule"/>
</dbReference>
<dbReference type="HAMAP" id="MF_00747">
    <property type="entry name" value="AceK"/>
    <property type="match status" value="1"/>
</dbReference>
<dbReference type="InterPro" id="IPR046855">
    <property type="entry name" value="AceK_kinase"/>
</dbReference>
<dbReference type="InterPro" id="IPR046854">
    <property type="entry name" value="AceK_regulatory"/>
</dbReference>
<dbReference type="InterPro" id="IPR010452">
    <property type="entry name" value="Isocitrate_DH_AceK"/>
</dbReference>
<dbReference type="NCBIfam" id="NF002804">
    <property type="entry name" value="PRK02946.1"/>
    <property type="match status" value="1"/>
</dbReference>
<dbReference type="PANTHER" id="PTHR39559">
    <property type="match status" value="1"/>
</dbReference>
<dbReference type="PANTHER" id="PTHR39559:SF1">
    <property type="entry name" value="ISOCITRATE DEHYDROGENASE KINASE_PHOSPHATASE"/>
    <property type="match status" value="1"/>
</dbReference>
<dbReference type="Pfam" id="PF06315">
    <property type="entry name" value="AceK_kinase"/>
    <property type="match status" value="1"/>
</dbReference>
<dbReference type="Pfam" id="PF20423">
    <property type="entry name" value="AceK_regulatory"/>
    <property type="match status" value="1"/>
</dbReference>
<dbReference type="PIRSF" id="PIRSF000719">
    <property type="entry name" value="AceK"/>
    <property type="match status" value="1"/>
</dbReference>
<reference key="1">
    <citation type="journal article" date="2008" name="Genome Res.">
        <title>Comparative genome analysis of Salmonella enteritidis PT4 and Salmonella gallinarum 287/91 provides insights into evolutionary and host adaptation pathways.</title>
        <authorList>
            <person name="Thomson N.R."/>
            <person name="Clayton D.J."/>
            <person name="Windhorst D."/>
            <person name="Vernikos G."/>
            <person name="Davidson S."/>
            <person name="Churcher C."/>
            <person name="Quail M.A."/>
            <person name="Stevens M."/>
            <person name="Jones M.A."/>
            <person name="Watson M."/>
            <person name="Barron A."/>
            <person name="Layton A."/>
            <person name="Pickard D."/>
            <person name="Kingsley R.A."/>
            <person name="Bignell A."/>
            <person name="Clark L."/>
            <person name="Harris B."/>
            <person name="Ormond D."/>
            <person name="Abdellah Z."/>
            <person name="Brooks K."/>
            <person name="Cherevach I."/>
            <person name="Chillingworth T."/>
            <person name="Woodward J."/>
            <person name="Norberczak H."/>
            <person name="Lord A."/>
            <person name="Arrowsmith C."/>
            <person name="Jagels K."/>
            <person name="Moule S."/>
            <person name="Mungall K."/>
            <person name="Saunders M."/>
            <person name="Whitehead S."/>
            <person name="Chabalgoity J.A."/>
            <person name="Maskell D."/>
            <person name="Humphreys T."/>
            <person name="Roberts M."/>
            <person name="Barrow P.A."/>
            <person name="Dougan G."/>
            <person name="Parkhill J."/>
        </authorList>
    </citation>
    <scope>NUCLEOTIDE SEQUENCE [LARGE SCALE GENOMIC DNA]</scope>
    <source>
        <strain>P125109</strain>
    </source>
</reference>
<proteinExistence type="inferred from homology"/>
<feature type="chain" id="PRO_1000133279" description="Isocitrate dehydrogenase kinase/phosphatase">
    <location>
        <begin position="1"/>
        <end position="583"/>
    </location>
</feature>
<feature type="active site" evidence="1">
    <location>
        <position position="371"/>
    </location>
</feature>
<feature type="binding site" evidence="1">
    <location>
        <begin position="315"/>
        <end position="321"/>
    </location>
    <ligand>
        <name>ATP</name>
        <dbReference type="ChEBI" id="CHEBI:30616"/>
    </ligand>
</feature>
<feature type="binding site" evidence="1">
    <location>
        <position position="336"/>
    </location>
    <ligand>
        <name>ATP</name>
        <dbReference type="ChEBI" id="CHEBI:30616"/>
    </ligand>
</feature>
<keyword id="KW-0067">ATP-binding</keyword>
<keyword id="KW-0963">Cytoplasm</keyword>
<keyword id="KW-0329">Glyoxylate bypass</keyword>
<keyword id="KW-0378">Hydrolase</keyword>
<keyword id="KW-0418">Kinase</keyword>
<keyword id="KW-0547">Nucleotide-binding</keyword>
<keyword id="KW-0904">Protein phosphatase</keyword>
<keyword id="KW-0723">Serine/threonine-protein kinase</keyword>
<keyword id="KW-0808">Transferase</keyword>
<keyword id="KW-0816">Tricarboxylic acid cycle</keyword>
<accession>B5QYG6</accession>
<evidence type="ECO:0000255" key="1">
    <source>
        <dbReference type="HAMAP-Rule" id="MF_00747"/>
    </source>
</evidence>